<gene>
    <name evidence="4" type="primary">dewB</name>
    <name type="ORF">ANIA_01837</name>
</gene>
<keyword id="KW-0183">Conidiation</keyword>
<keyword id="KW-1015">Disulfide bond</keyword>
<keyword id="KW-1185">Reference proteome</keyword>
<keyword id="KW-0964">Secreted</keyword>
<keyword id="KW-0732">Signal</keyword>
<keyword id="KW-0749">Sporulation</keyword>
<protein>
    <recommendedName>
        <fullName evidence="4">Class I hydrophobin dewB</fullName>
    </recommendedName>
</protein>
<evidence type="ECO:0000250" key="1">
    <source>
        <dbReference type="UniProtKB" id="Q04571"/>
    </source>
</evidence>
<evidence type="ECO:0000255" key="2"/>
<evidence type="ECO:0000269" key="3">
    <source>
    </source>
</evidence>
<evidence type="ECO:0000303" key="4">
    <source>
    </source>
</evidence>
<evidence type="ECO:0000305" key="5"/>
<sequence length="135" mass="13415">MKFIGLATLSLFALASADKFPVPDSITVAEGSSKCGDQAQLSCCNDVKYGGDTTVVQKGIAAGLLSDLLGAGSAAEGLGAFSGCSKLDISLLIGIEDILNQKCKQNIACCAKSGGSADGDLVGATLPCIALGSIL</sequence>
<dbReference type="EMBL" id="BN001307">
    <property type="protein sequence ID" value="CBF85659.1"/>
    <property type="molecule type" value="Genomic_DNA"/>
</dbReference>
<dbReference type="RefSeq" id="XP_659441.1">
    <property type="nucleotide sequence ID" value="XM_654349.2"/>
</dbReference>
<dbReference type="STRING" id="227321.Q5BC93"/>
<dbReference type="EnsemblFungi" id="CBF85659">
    <property type="protein sequence ID" value="CBF85659"/>
    <property type="gene ID" value="ANIA_01837"/>
</dbReference>
<dbReference type="GeneID" id="2874680"/>
<dbReference type="KEGG" id="ani:ANIA_01837"/>
<dbReference type="VEuPathDB" id="FungiDB:AN1837"/>
<dbReference type="eggNOG" id="ENOG502T10M">
    <property type="taxonomic scope" value="Eukaryota"/>
</dbReference>
<dbReference type="HOGENOM" id="CLU_106380_1_0_1"/>
<dbReference type="InParanoid" id="Q5BC93"/>
<dbReference type="OMA" id="QAQSKCG"/>
<dbReference type="OrthoDB" id="4225815at2759"/>
<dbReference type="Proteomes" id="UP000000560">
    <property type="component" value="Chromosome VII"/>
</dbReference>
<dbReference type="GO" id="GO:0005576">
    <property type="term" value="C:extracellular region"/>
    <property type="evidence" value="ECO:0007669"/>
    <property type="project" value="UniProtKB-KW"/>
</dbReference>
<dbReference type="GO" id="GO:0009277">
    <property type="term" value="C:fungal-type cell wall"/>
    <property type="evidence" value="ECO:0007669"/>
    <property type="project" value="InterPro"/>
</dbReference>
<dbReference type="GO" id="GO:0005199">
    <property type="term" value="F:structural constituent of cell wall"/>
    <property type="evidence" value="ECO:0007669"/>
    <property type="project" value="InterPro"/>
</dbReference>
<dbReference type="InterPro" id="IPR001338">
    <property type="entry name" value="Hydrophobin"/>
</dbReference>
<dbReference type="Pfam" id="PF01185">
    <property type="entry name" value="Hydrophobin"/>
    <property type="match status" value="1"/>
</dbReference>
<dbReference type="SMART" id="SM00075">
    <property type="entry name" value="HYDRO"/>
    <property type="match status" value="1"/>
</dbReference>
<reference key="1">
    <citation type="journal article" date="2005" name="Nature">
        <title>Sequencing of Aspergillus nidulans and comparative analysis with A. fumigatus and A. oryzae.</title>
        <authorList>
            <person name="Galagan J.E."/>
            <person name="Calvo S.E."/>
            <person name="Cuomo C."/>
            <person name="Ma L.-J."/>
            <person name="Wortman J.R."/>
            <person name="Batzoglou S."/>
            <person name="Lee S.-I."/>
            <person name="Bastuerkmen M."/>
            <person name="Spevak C.C."/>
            <person name="Clutterbuck J."/>
            <person name="Kapitonov V."/>
            <person name="Jurka J."/>
            <person name="Scazzocchio C."/>
            <person name="Farman M.L."/>
            <person name="Butler J."/>
            <person name="Purcell S."/>
            <person name="Harris S."/>
            <person name="Braus G.H."/>
            <person name="Draht O."/>
            <person name="Busch S."/>
            <person name="D'Enfert C."/>
            <person name="Bouchier C."/>
            <person name="Goldman G.H."/>
            <person name="Bell-Pedersen D."/>
            <person name="Griffiths-Jones S."/>
            <person name="Doonan J.H."/>
            <person name="Yu J."/>
            <person name="Vienken K."/>
            <person name="Pain A."/>
            <person name="Freitag M."/>
            <person name="Selker E.U."/>
            <person name="Archer D.B."/>
            <person name="Penalva M.A."/>
            <person name="Oakley B.R."/>
            <person name="Momany M."/>
            <person name="Tanaka T."/>
            <person name="Kumagai T."/>
            <person name="Asai K."/>
            <person name="Machida M."/>
            <person name="Nierman W.C."/>
            <person name="Denning D.W."/>
            <person name="Caddick M.X."/>
            <person name="Hynes M."/>
            <person name="Paoletti M."/>
            <person name="Fischer R."/>
            <person name="Miller B.L."/>
            <person name="Dyer P.S."/>
            <person name="Sachs M.S."/>
            <person name="Osmani S.A."/>
            <person name="Birren B.W."/>
        </authorList>
    </citation>
    <scope>NUCLEOTIDE SEQUENCE [LARGE SCALE GENOMIC DNA]</scope>
    <source>
        <strain>FGSC A4 / ATCC 38163 / CBS 112.46 / NRRL 194 / M139</strain>
    </source>
</reference>
<reference key="2">
    <citation type="journal article" date="2009" name="Fungal Genet. Biol.">
        <title>The 2008 update of the Aspergillus nidulans genome annotation: a community effort.</title>
        <authorList>
            <person name="Wortman J.R."/>
            <person name="Gilsenan J.M."/>
            <person name="Joardar V."/>
            <person name="Deegan J."/>
            <person name="Clutterbuck J."/>
            <person name="Andersen M.R."/>
            <person name="Archer D."/>
            <person name="Bencina M."/>
            <person name="Braus G."/>
            <person name="Coutinho P."/>
            <person name="von Dohren H."/>
            <person name="Doonan J."/>
            <person name="Driessen A.J."/>
            <person name="Durek P."/>
            <person name="Espeso E."/>
            <person name="Fekete E."/>
            <person name="Flipphi M."/>
            <person name="Estrada C.G."/>
            <person name="Geysens S."/>
            <person name="Goldman G."/>
            <person name="de Groot P.W."/>
            <person name="Hansen K."/>
            <person name="Harris S.D."/>
            <person name="Heinekamp T."/>
            <person name="Helmstaedt K."/>
            <person name="Henrissat B."/>
            <person name="Hofmann G."/>
            <person name="Homan T."/>
            <person name="Horio T."/>
            <person name="Horiuchi H."/>
            <person name="James S."/>
            <person name="Jones M."/>
            <person name="Karaffa L."/>
            <person name="Karanyi Z."/>
            <person name="Kato M."/>
            <person name="Keller N."/>
            <person name="Kelly D.E."/>
            <person name="Kiel J.A."/>
            <person name="Kim J.M."/>
            <person name="van der Klei I.J."/>
            <person name="Klis F.M."/>
            <person name="Kovalchuk A."/>
            <person name="Krasevec N."/>
            <person name="Kubicek C.P."/>
            <person name="Liu B."/>
            <person name="Maccabe A."/>
            <person name="Meyer V."/>
            <person name="Mirabito P."/>
            <person name="Miskei M."/>
            <person name="Mos M."/>
            <person name="Mullins J."/>
            <person name="Nelson D.R."/>
            <person name="Nielsen J."/>
            <person name="Oakley B.R."/>
            <person name="Osmani S.A."/>
            <person name="Pakula T."/>
            <person name="Paszewski A."/>
            <person name="Paulsen I."/>
            <person name="Pilsyk S."/>
            <person name="Pocsi I."/>
            <person name="Punt P.J."/>
            <person name="Ram A.F."/>
            <person name="Ren Q."/>
            <person name="Robellet X."/>
            <person name="Robson G."/>
            <person name="Seiboth B."/>
            <person name="van Solingen P."/>
            <person name="Specht T."/>
            <person name="Sun J."/>
            <person name="Taheri-Talesh N."/>
            <person name="Takeshita N."/>
            <person name="Ussery D."/>
            <person name="vanKuyk P.A."/>
            <person name="Visser H."/>
            <person name="van de Vondervoort P.J."/>
            <person name="de Vries R.P."/>
            <person name="Walton J."/>
            <person name="Xiang X."/>
            <person name="Xiong Y."/>
            <person name="Zeng A.P."/>
            <person name="Brandt B.W."/>
            <person name="Cornell M.J."/>
            <person name="van den Hondel C.A."/>
            <person name="Visser J."/>
            <person name="Oliver S.G."/>
            <person name="Turner G."/>
        </authorList>
    </citation>
    <scope>GENOME REANNOTATION</scope>
    <source>
        <strain>FGSC A4 / ATCC 38163 / CBS 112.46 / NRRL 194 / M139</strain>
    </source>
</reference>
<reference key="3">
    <citation type="journal article" date="2014" name="PLoS ONE">
        <title>Six hydrophobins are involved in hydrophobin rodlet formation in Aspergillus nidulans and contribute to hydrophobicity of the spore surface.</title>
        <authorList>
            <person name="Gruenbacher A."/>
            <person name="Throm T."/>
            <person name="Seidel C."/>
            <person name="Gutt B."/>
            <person name="Roehrig J."/>
            <person name="Strunk T."/>
            <person name="Vincze P."/>
            <person name="Walheim S."/>
            <person name="Schimmel T."/>
            <person name="Wenzel W."/>
            <person name="Fischer R."/>
        </authorList>
    </citation>
    <scope>FUNCTION</scope>
    <scope>SUBUNIT</scope>
    <scope>INDUCTION</scope>
    <scope>SUBCELLULAR LOCATION</scope>
</reference>
<proteinExistence type="evidence at protein level"/>
<name>DEWB_EMENI</name>
<comment type="function">
    <text evidence="3 5">Aerial growth, conidiation, and dispersal of filamentous fungi in the environment rely upon a capability of their secreting small amphipathic proteins called hydrophobins (HPBs) with low sequence identity. Class I can self-assemble into an outermost layer of rodlet bundles on aerial cell surfaces, conferring cellular hydrophobicity that supports fungal growth, development and dispersal; whereas Class II form highly ordered films at water-air interfaces through intermolecular interactions but contribute nothing to the rodlet structure (Probable). DewB is a class I hydrophobin that contributes to the hydrophobicity of the spore surface (PubMed:24722460).</text>
</comment>
<comment type="subunit">
    <text evidence="3">Self-assembles to form functional amyloid fibrils called rodlets. Self-assembly into fibrillar rodlets occurs spontaneously at hydrophobic:hydrophilic interfaces and the rodlets further associate laterally to form amphipathic monolayers.</text>
</comment>
<comment type="subcellular location">
    <subcellularLocation>
        <location evidence="3">Secreted</location>
    </subcellularLocation>
    <subcellularLocation>
        <location evidence="3">Spore wall</location>
    </subcellularLocation>
</comment>
<comment type="induction">
    <text evidence="3">Expressed after 12 to 24 hours post induction of asexual development, which correlates with the development of metulae and phialides (PubMed:24722460). Not expressed in hyphae and strongly induced during development (PubMed:24722460).</text>
</comment>
<comment type="similarity">
    <text evidence="5">Belongs to the fungal hydrophobin family.</text>
</comment>
<feature type="signal peptide" evidence="2">
    <location>
        <begin position="1"/>
        <end position="17"/>
    </location>
</feature>
<feature type="chain" id="PRO_5013988760" description="Class I hydrophobin dewB">
    <location>
        <begin position="18"/>
        <end position="135"/>
    </location>
</feature>
<feature type="disulfide bond" evidence="1">
    <location>
        <begin position="35"/>
        <end position="109"/>
    </location>
</feature>
<feature type="disulfide bond" evidence="1">
    <location>
        <begin position="43"/>
        <end position="103"/>
    </location>
</feature>
<feature type="disulfide bond" evidence="1">
    <location>
        <begin position="44"/>
        <end position="84"/>
    </location>
</feature>
<feature type="disulfide bond" evidence="1">
    <location>
        <begin position="110"/>
        <end position="128"/>
    </location>
</feature>
<accession>Q5BC93</accession>
<accession>C8VPP9</accession>
<organism>
    <name type="scientific">Emericella nidulans (strain FGSC A4 / ATCC 38163 / CBS 112.46 / NRRL 194 / M139)</name>
    <name type="common">Aspergillus nidulans</name>
    <dbReference type="NCBI Taxonomy" id="227321"/>
    <lineage>
        <taxon>Eukaryota</taxon>
        <taxon>Fungi</taxon>
        <taxon>Dikarya</taxon>
        <taxon>Ascomycota</taxon>
        <taxon>Pezizomycotina</taxon>
        <taxon>Eurotiomycetes</taxon>
        <taxon>Eurotiomycetidae</taxon>
        <taxon>Eurotiales</taxon>
        <taxon>Aspergillaceae</taxon>
        <taxon>Aspergillus</taxon>
        <taxon>Aspergillus subgen. Nidulantes</taxon>
    </lineage>
</organism>